<comment type="function">
    <text evidence="3">Has bacteriolytic activity.</text>
</comment>
<comment type="catalytic activity">
    <reaction evidence="1 3">
        <text>Preferential cleavage: Ala-|-Xaa, Val-|-Xaa in bacterial cell walls, elastin and other proteins.</text>
        <dbReference type="EC" id="3.4.21.12"/>
    </reaction>
</comment>
<comment type="activity regulation">
    <text evidence="3">Inhibited by phenylmethanesulfonyl fluoride (PMSF) and p-chloromercuribenzoate (PCMB).</text>
</comment>
<comment type="biophysicochemical properties">
    <phDependence>
        <text evidence="3">Optimum pH is 8.0. Active from pH 7.0 to 11.0.</text>
    </phDependence>
    <temperatureDependence>
        <text evidence="3">Optimum temperature is 70 degrees Celsius.</text>
    </temperatureDependence>
</comment>
<comment type="subunit">
    <text evidence="3">Monomer.</text>
</comment>
<comment type="subcellular location">
    <subcellularLocation>
        <location evidence="3">Secreted</location>
    </subcellularLocation>
</comment>
<comment type="similarity">
    <text evidence="2">Belongs to the peptidase S1 family.</text>
</comment>
<organism>
    <name type="scientific">Lysobacter sp. (strain XL1)</name>
    <dbReference type="NCBI Taxonomy" id="186334"/>
    <lineage>
        <taxon>Bacteria</taxon>
        <taxon>Pseudomonadati</taxon>
        <taxon>Pseudomonadota</taxon>
        <taxon>Gammaproteobacteria</taxon>
        <taxon>Lysobacterales</taxon>
        <taxon>Lysobacteraceae</taxon>
        <taxon>Lysobacter</taxon>
    </lineage>
</organism>
<name>PRLA_LYSSX</name>
<keyword id="KW-0044">Antibiotic</keyword>
<keyword id="KW-0929">Antimicrobial</keyword>
<keyword id="KW-0903">Direct protein sequencing</keyword>
<keyword id="KW-1015">Disulfide bond</keyword>
<keyword id="KW-0378">Hydrolase</keyword>
<keyword id="KW-0645">Protease</keyword>
<keyword id="KW-0964">Secreted</keyword>
<keyword id="KW-0720">Serine protease</keyword>
<feature type="chain" id="PRO_0000287680" description="Alpha-lytic protease L1">
    <location>
        <begin position="1"/>
        <end position="62" status="greater than"/>
    </location>
</feature>
<feature type="active site" description="Charge relay system">
    <location>
        <position position="48"/>
    </location>
</feature>
<feature type="disulfide bond" evidence="1 2">
    <location>
        <begin position="17"/>
        <end status="unknown"/>
    </location>
</feature>
<feature type="disulfide bond" evidence="1 2">
    <location>
        <begin position="42"/>
        <end status="unknown"/>
    </location>
</feature>
<feature type="non-consecutive residues" evidence="4">
    <location>
        <begin position="23"/>
        <end position="24"/>
    </location>
</feature>
<feature type="non-consecutive residues" evidence="4">
    <location>
        <begin position="26"/>
        <end position="27"/>
    </location>
</feature>
<feature type="non-consecutive residues" evidence="4">
    <location>
        <begin position="54"/>
        <end position="55"/>
    </location>
</feature>
<feature type="non-consecutive residues" evidence="4">
    <location>
        <begin position="58"/>
        <end position="59"/>
    </location>
</feature>
<feature type="non-terminal residue" evidence="4">
    <location>
        <position position="62"/>
    </location>
</feature>
<evidence type="ECO:0000250" key="1">
    <source>
        <dbReference type="UniProtKB" id="P00778"/>
    </source>
</evidence>
<evidence type="ECO:0000255" key="2">
    <source>
        <dbReference type="PROSITE-ProRule" id="PRU00274"/>
    </source>
</evidence>
<evidence type="ECO:0000269" key="3">
    <source ref="2"/>
</evidence>
<evidence type="ECO:0000303" key="4">
    <source>
    </source>
</evidence>
<evidence type="ECO:0000305" key="5"/>
<dbReference type="EC" id="3.4.21.12"/>
<dbReference type="SMR" id="P85142"/>
<dbReference type="GO" id="GO:0005576">
    <property type="term" value="C:extracellular region"/>
    <property type="evidence" value="ECO:0007669"/>
    <property type="project" value="UniProtKB-SubCell"/>
</dbReference>
<dbReference type="GO" id="GO:0008236">
    <property type="term" value="F:serine-type peptidase activity"/>
    <property type="evidence" value="ECO:0007669"/>
    <property type="project" value="UniProtKB-KW"/>
</dbReference>
<dbReference type="GO" id="GO:0042742">
    <property type="term" value="P:defense response to bacterium"/>
    <property type="evidence" value="ECO:0007669"/>
    <property type="project" value="UniProtKB-KW"/>
</dbReference>
<dbReference type="GO" id="GO:0006508">
    <property type="term" value="P:proteolysis"/>
    <property type="evidence" value="ECO:0007669"/>
    <property type="project" value="UniProtKB-KW"/>
</dbReference>
<dbReference type="Gene3D" id="2.40.10.10">
    <property type="entry name" value="Trypsin-like serine proteases"/>
    <property type="match status" value="1"/>
</dbReference>
<dbReference type="InterPro" id="IPR009003">
    <property type="entry name" value="Peptidase_S1_PA"/>
</dbReference>
<dbReference type="InterPro" id="IPR043504">
    <property type="entry name" value="Peptidase_S1_PA_chymotrypsin"/>
</dbReference>
<dbReference type="SUPFAM" id="SSF50494">
    <property type="entry name" value="Trypsin-like serine proteases"/>
    <property type="match status" value="1"/>
</dbReference>
<dbReference type="PROSITE" id="PS00135">
    <property type="entry name" value="TRYPSIN_SER"/>
    <property type="match status" value="1"/>
</dbReference>
<reference evidence="5" key="1">
    <citation type="journal article" date="2004" name="Biochemistry (Mosc.)">
        <title>Structural investigations and identification of the extracellular bacteriolytic endopeptidase L1 from Lysobacter sp. XL1.</title>
        <authorList>
            <person name="Muranova T.A."/>
            <person name="Krasovskaya L.A."/>
            <person name="Tsfasman I.M."/>
            <person name="Stepnaya O.A."/>
            <person name="Kulaev I.S."/>
        </authorList>
    </citation>
    <scope>PROTEIN SEQUENCE</scope>
</reference>
<reference evidence="5" key="2">
    <citation type="submission" date="2007-04" db="UniProtKB">
        <title>Identification of extracellular bacteriolytic enzymes from Lysobacter sp. XL1.</title>
        <authorList>
            <person name="Muranova T.A."/>
            <person name="Stepnaya O.A."/>
            <person name="Tsfasman I.M."/>
            <person name="Kulaev I.S."/>
        </authorList>
    </citation>
    <scope>FUNCTION</scope>
    <scope>CATALYTIC ACTIVITY</scope>
    <scope>ACTIVITY REGULATION</scope>
    <scope>BIOPHYSICOCHEMICAL PROPERTIES</scope>
    <scope>SUBUNIT</scope>
    <scope>SUBCELLULAR LOCATION</scope>
</reference>
<accession>P85142</accession>
<proteinExistence type="evidence at protein level"/>
<protein>
    <recommendedName>
        <fullName>Alpha-lytic protease L1</fullName>
        <ecNumber>3.4.21.12</ecNumber>
    </recommendedName>
    <alternativeName>
        <fullName>Alpha-lytic endopeptidase L1</fullName>
    </alternativeName>
</protein>
<sequence length="62" mass="6611">VNVLGGIEYSINNATLCSVGFSVRVFNYAEGAVRGLTQGNACMGRGDSGGSWFTLFERQYGL</sequence>